<dbReference type="EC" id="3.6.4.-" evidence="1"/>
<dbReference type="EMBL" id="CP000038">
    <property type="protein sequence ID" value="AAZ86860.1"/>
    <property type="molecule type" value="Genomic_DNA"/>
</dbReference>
<dbReference type="RefSeq" id="WP_001117026.1">
    <property type="nucleotide sequence ID" value="NC_007384.1"/>
</dbReference>
<dbReference type="SMR" id="Q3Z5V2"/>
<dbReference type="KEGG" id="ssn:SSON_0065"/>
<dbReference type="HOGENOM" id="CLU_011520_0_0_6"/>
<dbReference type="Proteomes" id="UP000002529">
    <property type="component" value="Chromosome"/>
</dbReference>
<dbReference type="GO" id="GO:0005524">
    <property type="term" value="F:ATP binding"/>
    <property type="evidence" value="ECO:0007669"/>
    <property type="project" value="UniProtKB-UniRule"/>
</dbReference>
<dbReference type="GO" id="GO:0003677">
    <property type="term" value="F:DNA binding"/>
    <property type="evidence" value="ECO:0007669"/>
    <property type="project" value="UniProtKB-KW"/>
</dbReference>
<dbReference type="GO" id="GO:0004386">
    <property type="term" value="F:helicase activity"/>
    <property type="evidence" value="ECO:0007669"/>
    <property type="project" value="UniProtKB-UniRule"/>
</dbReference>
<dbReference type="GO" id="GO:0016817">
    <property type="term" value="F:hydrolase activity, acting on acid anhydrides"/>
    <property type="evidence" value="ECO:0007669"/>
    <property type="project" value="InterPro"/>
</dbReference>
<dbReference type="GO" id="GO:0006355">
    <property type="term" value="P:regulation of DNA-templated transcription"/>
    <property type="evidence" value="ECO:0007669"/>
    <property type="project" value="UniProtKB-UniRule"/>
</dbReference>
<dbReference type="CDD" id="cd18011">
    <property type="entry name" value="DEXDc_RapA"/>
    <property type="match status" value="1"/>
</dbReference>
<dbReference type="CDD" id="cd18793">
    <property type="entry name" value="SF2_C_SNF"/>
    <property type="match status" value="1"/>
</dbReference>
<dbReference type="FunFam" id="2.30.30.140:FF:000020">
    <property type="entry name" value="RNA polymerase-associated protein RapA"/>
    <property type="match status" value="1"/>
</dbReference>
<dbReference type="FunFam" id="2.30.30.930:FF:000001">
    <property type="entry name" value="RNA polymerase-associated protein RapA"/>
    <property type="match status" value="1"/>
</dbReference>
<dbReference type="FunFam" id="3.30.360.80:FF:000001">
    <property type="entry name" value="RNA polymerase-associated protein RapA"/>
    <property type="match status" value="1"/>
</dbReference>
<dbReference type="FunFam" id="3.40.50.10810:FF:000012">
    <property type="entry name" value="RNA polymerase-associated protein RapA"/>
    <property type="match status" value="1"/>
</dbReference>
<dbReference type="FunFam" id="3.40.50.300:FF:000350">
    <property type="entry name" value="RNA polymerase-associated protein RapA"/>
    <property type="match status" value="1"/>
</dbReference>
<dbReference type="Gene3D" id="2.30.30.140">
    <property type="match status" value="1"/>
</dbReference>
<dbReference type="Gene3D" id="2.30.30.930">
    <property type="match status" value="1"/>
</dbReference>
<dbReference type="Gene3D" id="3.30.360.80">
    <property type="match status" value="1"/>
</dbReference>
<dbReference type="Gene3D" id="6.10.140.1500">
    <property type="match status" value="1"/>
</dbReference>
<dbReference type="Gene3D" id="6.10.140.2230">
    <property type="match status" value="1"/>
</dbReference>
<dbReference type="Gene3D" id="3.40.50.300">
    <property type="entry name" value="P-loop containing nucleotide triphosphate hydrolases"/>
    <property type="match status" value="1"/>
</dbReference>
<dbReference type="Gene3D" id="3.40.50.10810">
    <property type="entry name" value="Tandem AAA-ATPase domain"/>
    <property type="match status" value="1"/>
</dbReference>
<dbReference type="HAMAP" id="MF_01821">
    <property type="entry name" value="Helicase_RapA"/>
    <property type="match status" value="1"/>
</dbReference>
<dbReference type="InterPro" id="IPR014001">
    <property type="entry name" value="Helicase_ATP-bd"/>
</dbReference>
<dbReference type="InterPro" id="IPR001650">
    <property type="entry name" value="Helicase_C-like"/>
</dbReference>
<dbReference type="InterPro" id="IPR023949">
    <property type="entry name" value="Helicase_RapA"/>
</dbReference>
<dbReference type="InterPro" id="IPR027417">
    <property type="entry name" value="P-loop_NTPase"/>
</dbReference>
<dbReference type="InterPro" id="IPR022737">
    <property type="entry name" value="RapA_C"/>
</dbReference>
<dbReference type="InterPro" id="IPR038718">
    <property type="entry name" value="SNF2-like_sf"/>
</dbReference>
<dbReference type="InterPro" id="IPR049730">
    <property type="entry name" value="SNF2/RAD54-like_C"/>
</dbReference>
<dbReference type="InterPro" id="IPR000330">
    <property type="entry name" value="SNF2_N"/>
</dbReference>
<dbReference type="InterPro" id="IPR040765">
    <property type="entry name" value="Tudor_1_RapA"/>
</dbReference>
<dbReference type="InterPro" id="IPR040766">
    <property type="entry name" value="Tudor_2_RapA"/>
</dbReference>
<dbReference type="NCBIfam" id="NF003426">
    <property type="entry name" value="PRK04914.1"/>
    <property type="match status" value="1"/>
</dbReference>
<dbReference type="PANTHER" id="PTHR45766">
    <property type="entry name" value="DNA ANNEALING HELICASE AND ENDONUCLEASE ZRANB3 FAMILY MEMBER"/>
    <property type="match status" value="1"/>
</dbReference>
<dbReference type="PANTHER" id="PTHR45766:SF6">
    <property type="entry name" value="SWI_SNF-RELATED MATRIX-ASSOCIATED ACTIN-DEPENDENT REGULATOR OF CHROMATIN SUBFAMILY A-LIKE PROTEIN 1"/>
    <property type="match status" value="1"/>
</dbReference>
<dbReference type="Pfam" id="PF00271">
    <property type="entry name" value="Helicase_C"/>
    <property type="match status" value="1"/>
</dbReference>
<dbReference type="Pfam" id="PF12137">
    <property type="entry name" value="RapA_C"/>
    <property type="match status" value="1"/>
</dbReference>
<dbReference type="Pfam" id="PF00176">
    <property type="entry name" value="SNF2-rel_dom"/>
    <property type="match status" value="1"/>
</dbReference>
<dbReference type="Pfam" id="PF18339">
    <property type="entry name" value="Tudor_1_RapA"/>
    <property type="match status" value="1"/>
</dbReference>
<dbReference type="Pfam" id="PF18337">
    <property type="entry name" value="Tudor_RapA"/>
    <property type="match status" value="1"/>
</dbReference>
<dbReference type="SMART" id="SM00487">
    <property type="entry name" value="DEXDc"/>
    <property type="match status" value="1"/>
</dbReference>
<dbReference type="SMART" id="SM00490">
    <property type="entry name" value="HELICc"/>
    <property type="match status" value="1"/>
</dbReference>
<dbReference type="SUPFAM" id="SSF52540">
    <property type="entry name" value="P-loop containing nucleoside triphosphate hydrolases"/>
    <property type="match status" value="2"/>
</dbReference>
<dbReference type="PROSITE" id="PS51192">
    <property type="entry name" value="HELICASE_ATP_BIND_1"/>
    <property type="match status" value="1"/>
</dbReference>
<dbReference type="PROSITE" id="PS51194">
    <property type="entry name" value="HELICASE_CTER"/>
    <property type="match status" value="1"/>
</dbReference>
<name>RAPA_SHISS</name>
<evidence type="ECO:0000255" key="1">
    <source>
        <dbReference type="HAMAP-Rule" id="MF_01821"/>
    </source>
</evidence>
<gene>
    <name evidence="1" type="primary">rapA</name>
    <name type="ordered locus">SSON_0065</name>
</gene>
<keyword id="KW-0010">Activator</keyword>
<keyword id="KW-0067">ATP-binding</keyword>
<keyword id="KW-0238">DNA-binding</keyword>
<keyword id="KW-0347">Helicase</keyword>
<keyword id="KW-0378">Hydrolase</keyword>
<keyword id="KW-0547">Nucleotide-binding</keyword>
<keyword id="KW-1185">Reference proteome</keyword>
<keyword id="KW-0804">Transcription</keyword>
<keyword id="KW-0805">Transcription regulation</keyword>
<organism>
    <name type="scientific">Shigella sonnei (strain Ss046)</name>
    <dbReference type="NCBI Taxonomy" id="300269"/>
    <lineage>
        <taxon>Bacteria</taxon>
        <taxon>Pseudomonadati</taxon>
        <taxon>Pseudomonadota</taxon>
        <taxon>Gammaproteobacteria</taxon>
        <taxon>Enterobacterales</taxon>
        <taxon>Enterobacteriaceae</taxon>
        <taxon>Shigella</taxon>
    </lineage>
</organism>
<feature type="chain" id="PRO_1000088395" description="RNA polymerase-associated protein RapA">
    <location>
        <begin position="1"/>
        <end position="968"/>
    </location>
</feature>
<feature type="domain" description="Helicase ATP-binding" evidence="1">
    <location>
        <begin position="164"/>
        <end position="334"/>
    </location>
</feature>
<feature type="domain" description="Helicase C-terminal" evidence="1">
    <location>
        <begin position="490"/>
        <end position="662"/>
    </location>
</feature>
<feature type="short sequence motif" description="DEAH box">
    <location>
        <begin position="280"/>
        <end position="283"/>
    </location>
</feature>
<feature type="binding site" evidence="1">
    <location>
        <begin position="177"/>
        <end position="184"/>
    </location>
    <ligand>
        <name>ATP</name>
        <dbReference type="ChEBI" id="CHEBI:30616"/>
    </ligand>
</feature>
<reference key="1">
    <citation type="journal article" date="2005" name="Nucleic Acids Res.">
        <title>Genome dynamics and diversity of Shigella species, the etiologic agents of bacillary dysentery.</title>
        <authorList>
            <person name="Yang F."/>
            <person name="Yang J."/>
            <person name="Zhang X."/>
            <person name="Chen L."/>
            <person name="Jiang Y."/>
            <person name="Yan Y."/>
            <person name="Tang X."/>
            <person name="Wang J."/>
            <person name="Xiong Z."/>
            <person name="Dong J."/>
            <person name="Xue Y."/>
            <person name="Zhu Y."/>
            <person name="Xu X."/>
            <person name="Sun L."/>
            <person name="Chen S."/>
            <person name="Nie H."/>
            <person name="Peng J."/>
            <person name="Xu J."/>
            <person name="Wang Y."/>
            <person name="Yuan Z."/>
            <person name="Wen Y."/>
            <person name="Yao Z."/>
            <person name="Shen Y."/>
            <person name="Qiang B."/>
            <person name="Hou Y."/>
            <person name="Yu J."/>
            <person name="Jin Q."/>
        </authorList>
    </citation>
    <scope>NUCLEOTIDE SEQUENCE [LARGE SCALE GENOMIC DNA]</scope>
    <source>
        <strain>Ss046</strain>
    </source>
</reference>
<protein>
    <recommendedName>
        <fullName evidence="1">RNA polymerase-associated protein RapA</fullName>
        <ecNumber evidence="1">3.6.4.-</ecNumber>
    </recommendedName>
    <alternativeName>
        <fullName evidence="1">ATP-dependent helicase HepA</fullName>
    </alternativeName>
</protein>
<accession>Q3Z5V2</accession>
<proteinExistence type="inferred from homology"/>
<sequence>MPFTLGQRWISDTESELGLGTVVAVDARTVTLLFPSTGENRLYARSDSPVTRVMFNPGDTITSHDGWQMQVEEVKEENGLLTYIGTRLDTEESGVALREVFLDSKLVFSKPQDRLFAGQIDRMDRFALRYRARKYSSEQFRMPYSGLRGQRTSLIPHQLNIAHDVGRRHAPRVLLADEVGLGKTIEAGMILHQQLLSGAAERVLIIVPETLQHQWLVEMLRRFNLRFALFDDERYAEAQHDAYNPFDTEQLVICSLDFARRSKQRLEHLCEAEWDLLVVDEAHHLVWSEDAPSREYQAIEQLAEHVPGVLLLTATPEQLGMESHFARLRLLDPNRFHDFAQFVEEQKNYRPVADAVAMLLAGNKLSNDELNMLGEMIGEQDIEPLLQAANSDSEDAQSARQELVSMLMDRHGTSRVLFRNTRNGVKGFPKRELHTIKLPLPTQYQTAIKVSGIMGARKSAEDRARDMLYPERIYQEFEGDNATWWNFDPRVEWLMGYLTSHRSQKVLVICAKAATALQLEQVLREREGIRAAVFHEGMSIIERDRAAAWFAEEDTGAQVLLCSEIGSEGRNFQFASHMVMFDLPFNPDLLEQRIGRLDRIGQAHDIQIHVPYLEKTAQSVLVRWYHEGLDAFEHTCPTGRTIYDSVYNDLINYLASPVQTEGFDDLIKNCREQHEALKAQLEQGRDRLLEIHSNGGEKAQALAESIEEQDDDTNLIAFAMNLFDIIGINQDDRGDNMIVLTPSDHMLVPDFPGLSEDGITITFDREVALAREDAQFITWEHPLIRNGLDLILSGDTGSSTISLLKNKALPVGTLLVELIYVVEAQAPKQLQLNRFLPPTPVRMLLDKNGNNLAAQVEFETFNRQLNAVNRHTGSKLVNAVQQDVHAILQLGEAQIEKSARALIDAARNEADEKLSAELSRMEALRAVNPNIRDDELTAIESNRQQVMESLDQAGWRLDALRLIVVTHQ</sequence>
<comment type="function">
    <text evidence="1">Transcription regulator that activates transcription by stimulating RNA polymerase (RNAP) recycling in case of stress conditions such as supercoiled DNA or high salt concentrations. Probably acts by releasing the RNAP, when it is trapped or immobilized on tightly supercoiled DNA. Does not activate transcription on linear DNA. Probably not involved in DNA repair.</text>
</comment>
<comment type="subunit">
    <text evidence="1">Interacts with the RNAP. Has a higher affinity for the core RNAP than for the holoenzyme. Its ATPase activity is stimulated by binding to RNAP.</text>
</comment>
<comment type="similarity">
    <text evidence="1">Belongs to the SNF2/RAD54 helicase family. RapA subfamily.</text>
</comment>